<reference key="1">
    <citation type="journal article" date="1998" name="DNA Res.">
        <title>Structural analysis of Arabidopsis thaliana chromosome 5. V. Sequence features of the regions of 1,381,565 bp covered by twenty one physically assigned P1 and TAC clones.</title>
        <authorList>
            <person name="Kaneko T."/>
            <person name="Kotani H."/>
            <person name="Nakamura Y."/>
            <person name="Sato S."/>
            <person name="Asamizu E."/>
            <person name="Miyajima N."/>
            <person name="Tabata S."/>
        </authorList>
    </citation>
    <scope>NUCLEOTIDE SEQUENCE [LARGE SCALE GENOMIC DNA]</scope>
    <source>
        <strain>cv. Columbia</strain>
    </source>
</reference>
<reference key="2">
    <citation type="journal article" date="2017" name="Plant J.">
        <title>Araport11: a complete reannotation of the Arabidopsis thaliana reference genome.</title>
        <authorList>
            <person name="Cheng C.Y."/>
            <person name="Krishnakumar V."/>
            <person name="Chan A.P."/>
            <person name="Thibaud-Nissen F."/>
            <person name="Schobel S."/>
            <person name="Town C.D."/>
        </authorList>
    </citation>
    <scope>GENOME REANNOTATION</scope>
    <source>
        <strain>cv. Columbia</strain>
    </source>
</reference>
<dbReference type="EC" id="3.6.1.-" evidence="1"/>
<dbReference type="EMBL" id="AB011482">
    <property type="protein sequence ID" value="BAB08783.1"/>
    <property type="molecule type" value="Genomic_DNA"/>
</dbReference>
<dbReference type="EMBL" id="CP002688">
    <property type="protein sequence ID" value="AED96906.1"/>
    <property type="molecule type" value="Genomic_DNA"/>
</dbReference>
<dbReference type="RefSeq" id="NP_200556.1">
    <property type="nucleotide sequence ID" value="NM_125129.2"/>
</dbReference>
<dbReference type="SMR" id="Q9FKM3"/>
<dbReference type="FunCoup" id="Q9FKM3">
    <property type="interactions" value="1638"/>
</dbReference>
<dbReference type="STRING" id="3702.Q9FKM3"/>
<dbReference type="PaxDb" id="3702-AT5G57480.1"/>
<dbReference type="ProteomicsDB" id="244625"/>
<dbReference type="EnsemblPlants" id="AT5G57480.1">
    <property type="protein sequence ID" value="AT5G57480.1"/>
    <property type="gene ID" value="AT5G57480"/>
</dbReference>
<dbReference type="GeneID" id="835852"/>
<dbReference type="Gramene" id="AT5G57480.1">
    <property type="protein sequence ID" value="AT5G57480.1"/>
    <property type="gene ID" value="AT5G57480"/>
</dbReference>
<dbReference type="KEGG" id="ath:AT5G57480"/>
<dbReference type="Araport" id="AT5G57480"/>
<dbReference type="TAIR" id="AT5G57480"/>
<dbReference type="eggNOG" id="KOG0743">
    <property type="taxonomic scope" value="Eukaryota"/>
</dbReference>
<dbReference type="HOGENOM" id="CLU_010189_0_1_1"/>
<dbReference type="InParanoid" id="Q9FKM3"/>
<dbReference type="OMA" id="FIMERAN"/>
<dbReference type="OrthoDB" id="10251412at2759"/>
<dbReference type="PhylomeDB" id="Q9FKM3"/>
<dbReference type="PRO" id="PR:Q9FKM3"/>
<dbReference type="Proteomes" id="UP000006548">
    <property type="component" value="Chromosome 5"/>
</dbReference>
<dbReference type="ExpressionAtlas" id="Q9FKM3">
    <property type="expression patterns" value="baseline and differential"/>
</dbReference>
<dbReference type="GO" id="GO:0005524">
    <property type="term" value="F:ATP binding"/>
    <property type="evidence" value="ECO:0007669"/>
    <property type="project" value="UniProtKB-KW"/>
</dbReference>
<dbReference type="GO" id="GO:0016887">
    <property type="term" value="F:ATP hydrolysis activity"/>
    <property type="evidence" value="ECO:0007669"/>
    <property type="project" value="InterPro"/>
</dbReference>
<dbReference type="GO" id="GO:0006950">
    <property type="term" value="P:response to stress"/>
    <property type="evidence" value="ECO:0007669"/>
    <property type="project" value="UniProtKB-ARBA"/>
</dbReference>
<dbReference type="CDD" id="cd19510">
    <property type="entry name" value="RecA-like_BCS1"/>
    <property type="match status" value="1"/>
</dbReference>
<dbReference type="Gene3D" id="3.40.50.300">
    <property type="entry name" value="P-loop containing nucleotide triphosphate hydrolases"/>
    <property type="match status" value="1"/>
</dbReference>
<dbReference type="InterPro" id="IPR003593">
    <property type="entry name" value="AAA+_ATPase"/>
</dbReference>
<dbReference type="InterPro" id="IPR025753">
    <property type="entry name" value="AAA_N_dom"/>
</dbReference>
<dbReference type="InterPro" id="IPR003959">
    <property type="entry name" value="ATPase_AAA_core"/>
</dbReference>
<dbReference type="InterPro" id="IPR050747">
    <property type="entry name" value="Mitochondrial_chaperone_BCS1"/>
</dbReference>
<dbReference type="InterPro" id="IPR027417">
    <property type="entry name" value="P-loop_NTPase"/>
</dbReference>
<dbReference type="PANTHER" id="PTHR23070">
    <property type="entry name" value="BCS1 AAA-TYPE ATPASE"/>
    <property type="match status" value="1"/>
</dbReference>
<dbReference type="Pfam" id="PF00004">
    <property type="entry name" value="AAA"/>
    <property type="match status" value="1"/>
</dbReference>
<dbReference type="Pfam" id="PF14363">
    <property type="entry name" value="AAA_assoc"/>
    <property type="match status" value="1"/>
</dbReference>
<dbReference type="SMART" id="SM00382">
    <property type="entry name" value="AAA"/>
    <property type="match status" value="1"/>
</dbReference>
<dbReference type="SUPFAM" id="SSF52540">
    <property type="entry name" value="P-loop containing nucleoside triphosphate hydrolases"/>
    <property type="match status" value="1"/>
</dbReference>
<feature type="signal peptide" evidence="2">
    <location>
        <begin position="1"/>
        <end position="24"/>
    </location>
</feature>
<feature type="chain" id="PRO_0000434722" description="AAA-ATPase At5g57480" evidence="2">
    <location>
        <begin position="25"/>
        <end position="520"/>
    </location>
</feature>
<feature type="region of interest" description="Disordered" evidence="3">
    <location>
        <begin position="307"/>
        <end position="340"/>
    </location>
</feature>
<feature type="region of interest" description="Disordered" evidence="3">
    <location>
        <begin position="467"/>
        <end position="520"/>
    </location>
</feature>
<feature type="compositionally biased region" description="Gly residues" evidence="3">
    <location>
        <begin position="328"/>
        <end position="340"/>
    </location>
</feature>
<feature type="compositionally biased region" description="Acidic residues" evidence="3">
    <location>
        <begin position="497"/>
        <end position="512"/>
    </location>
</feature>
<feature type="binding site" evidence="2">
    <location>
        <begin position="244"/>
        <end position="251"/>
    </location>
    <ligand>
        <name>ATP</name>
        <dbReference type="ChEBI" id="CHEBI:30616"/>
    </ligand>
</feature>
<gene>
    <name evidence="5" type="ordered locus">At5g57480</name>
    <name evidence="6" type="ORF">MUA2.5</name>
</gene>
<name>AATPK_ARATH</name>
<comment type="catalytic activity">
    <reaction evidence="1">
        <text>ATP + H2O = ADP + phosphate + H(+)</text>
        <dbReference type="Rhea" id="RHEA:13065"/>
        <dbReference type="ChEBI" id="CHEBI:15377"/>
        <dbReference type="ChEBI" id="CHEBI:15378"/>
        <dbReference type="ChEBI" id="CHEBI:30616"/>
        <dbReference type="ChEBI" id="CHEBI:43474"/>
        <dbReference type="ChEBI" id="CHEBI:456216"/>
    </reaction>
</comment>
<comment type="cofactor">
    <cofactor evidence="1">
        <name>Mg(2+)</name>
        <dbReference type="ChEBI" id="CHEBI:18420"/>
    </cofactor>
</comment>
<comment type="similarity">
    <text evidence="4">Belongs to the AAA ATPase family. BCS1 subfamily.</text>
</comment>
<protein>
    <recommendedName>
        <fullName>AAA-ATPase At5g57480</fullName>
        <ecNumber evidence="1">3.6.1.-</ecNumber>
    </recommendedName>
</protein>
<keyword id="KW-0067">ATP-binding</keyword>
<keyword id="KW-0378">Hydrolase</keyword>
<keyword id="KW-0460">Magnesium</keyword>
<keyword id="KW-0547">Nucleotide-binding</keyword>
<keyword id="KW-1185">Reference proteome</keyword>
<keyword id="KW-0732">Signal</keyword>
<accession>Q9FKM3</accession>
<proteinExistence type="inferred from homology"/>
<sequence>MKEYWTSLASLLGVLAFCQSLMQSIFPPELRFAFLKFFNRIFHVFSSYCYFDITEIDGVNTNELYNAVQLYLSSSVSIAGNRLSLTRAVNSSSITFGLSNNDSIVDTFNGVTVLWEHVVTQRQTQTFAWRPLPEEKRGFTLRIKKKDKTLILNSYLDYIMERANEIRRKNQDRLLYTNSRGGSLDSRGHPWESVPFKHPSTFETLAMDPRKKQQIMDDLKDFAEGQVFYQKTGRAWKRGYLLYGPPGTGKSSMIAAMANYLGYDIYDLELTEVHSNSELRKLLMKTSSKSIIVIEDIDCSINLTNRKKNSSNVSSQRSYYDAETRNGSGSGSGGSGEEGGNGNTITLSGLLNFTDGLWSCCGSERIFVFTTNHIEKLDPALLRSGRMDMHIYMSFCNFPSLKILLKNYLGYGVEDINGDVLKEMEMVVEKAEMTPADVSEALIKNRRDKEKAIRELLEDLKSRGERNVKDGKLRGGSGNLTELEVVEEQEKRAIDSQNEDEDHDEEEIELEDNICKTRED</sequence>
<organism evidence="7">
    <name type="scientific">Arabidopsis thaliana</name>
    <name type="common">Mouse-ear cress</name>
    <dbReference type="NCBI Taxonomy" id="3702"/>
    <lineage>
        <taxon>Eukaryota</taxon>
        <taxon>Viridiplantae</taxon>
        <taxon>Streptophyta</taxon>
        <taxon>Embryophyta</taxon>
        <taxon>Tracheophyta</taxon>
        <taxon>Spermatophyta</taxon>
        <taxon>Magnoliopsida</taxon>
        <taxon>eudicotyledons</taxon>
        <taxon>Gunneridae</taxon>
        <taxon>Pentapetalae</taxon>
        <taxon>rosids</taxon>
        <taxon>malvids</taxon>
        <taxon>Brassicales</taxon>
        <taxon>Brassicaceae</taxon>
        <taxon>Camelineae</taxon>
        <taxon>Arabidopsis</taxon>
    </lineage>
</organism>
<evidence type="ECO:0000250" key="1">
    <source>
        <dbReference type="UniProtKB" id="Q9FLD5"/>
    </source>
</evidence>
<evidence type="ECO:0000255" key="2"/>
<evidence type="ECO:0000256" key="3">
    <source>
        <dbReference type="SAM" id="MobiDB-lite"/>
    </source>
</evidence>
<evidence type="ECO:0000305" key="4"/>
<evidence type="ECO:0000312" key="5">
    <source>
        <dbReference type="EMBL" id="AED96906.1"/>
    </source>
</evidence>
<evidence type="ECO:0000312" key="6">
    <source>
        <dbReference type="EMBL" id="BAB08783.1"/>
    </source>
</evidence>
<evidence type="ECO:0000312" key="7">
    <source>
        <dbReference type="Proteomes" id="UP000006548"/>
    </source>
</evidence>